<dbReference type="EC" id="3.5.4.19" evidence="1"/>
<dbReference type="EMBL" id="CP001661">
    <property type="protein sequence ID" value="ACT16813.1"/>
    <property type="molecule type" value="Genomic_DNA"/>
</dbReference>
<dbReference type="SMR" id="C6E0X3"/>
<dbReference type="STRING" id="443144.GM21_0739"/>
<dbReference type="KEGG" id="gem:GM21_0739"/>
<dbReference type="eggNOG" id="COG0139">
    <property type="taxonomic scope" value="Bacteria"/>
</dbReference>
<dbReference type="HOGENOM" id="CLU_048577_5_0_7"/>
<dbReference type="OrthoDB" id="9795769at2"/>
<dbReference type="UniPathway" id="UPA00031">
    <property type="reaction ID" value="UER00008"/>
</dbReference>
<dbReference type="GO" id="GO:0005737">
    <property type="term" value="C:cytoplasm"/>
    <property type="evidence" value="ECO:0007669"/>
    <property type="project" value="UniProtKB-SubCell"/>
</dbReference>
<dbReference type="GO" id="GO:0000287">
    <property type="term" value="F:magnesium ion binding"/>
    <property type="evidence" value="ECO:0007669"/>
    <property type="project" value="UniProtKB-UniRule"/>
</dbReference>
<dbReference type="GO" id="GO:0004635">
    <property type="term" value="F:phosphoribosyl-AMP cyclohydrolase activity"/>
    <property type="evidence" value="ECO:0007669"/>
    <property type="project" value="UniProtKB-UniRule"/>
</dbReference>
<dbReference type="GO" id="GO:0008270">
    <property type="term" value="F:zinc ion binding"/>
    <property type="evidence" value="ECO:0007669"/>
    <property type="project" value="UniProtKB-UniRule"/>
</dbReference>
<dbReference type="GO" id="GO:0000105">
    <property type="term" value="P:L-histidine biosynthetic process"/>
    <property type="evidence" value="ECO:0007669"/>
    <property type="project" value="UniProtKB-UniRule"/>
</dbReference>
<dbReference type="FunFam" id="3.10.20.810:FF:000001">
    <property type="entry name" value="Histidine biosynthesis bifunctional protein HisIE"/>
    <property type="match status" value="1"/>
</dbReference>
<dbReference type="Gene3D" id="3.10.20.810">
    <property type="entry name" value="Phosphoribosyl-AMP cyclohydrolase"/>
    <property type="match status" value="1"/>
</dbReference>
<dbReference type="HAMAP" id="MF_01021">
    <property type="entry name" value="HisI"/>
    <property type="match status" value="1"/>
</dbReference>
<dbReference type="InterPro" id="IPR026660">
    <property type="entry name" value="PRA-CH"/>
</dbReference>
<dbReference type="InterPro" id="IPR002496">
    <property type="entry name" value="PRib_AMP_CycHydrolase_dom"/>
</dbReference>
<dbReference type="InterPro" id="IPR038019">
    <property type="entry name" value="PRib_AMP_CycHydrolase_sf"/>
</dbReference>
<dbReference type="NCBIfam" id="NF000768">
    <property type="entry name" value="PRK00051.1"/>
    <property type="match status" value="1"/>
</dbReference>
<dbReference type="PANTHER" id="PTHR42945">
    <property type="entry name" value="HISTIDINE BIOSYNTHESIS BIFUNCTIONAL PROTEIN"/>
    <property type="match status" value="1"/>
</dbReference>
<dbReference type="PANTHER" id="PTHR42945:SF1">
    <property type="entry name" value="HISTIDINE BIOSYNTHESIS BIFUNCTIONAL PROTEIN HIS7"/>
    <property type="match status" value="1"/>
</dbReference>
<dbReference type="Pfam" id="PF01502">
    <property type="entry name" value="PRA-CH"/>
    <property type="match status" value="1"/>
</dbReference>
<dbReference type="SUPFAM" id="SSF141734">
    <property type="entry name" value="HisI-like"/>
    <property type="match status" value="1"/>
</dbReference>
<accession>C6E0X3</accession>
<proteinExistence type="inferred from homology"/>
<reference key="1">
    <citation type="submission" date="2009-07" db="EMBL/GenBank/DDBJ databases">
        <title>Complete sequence of Geobacter sp. M21.</title>
        <authorList>
            <consortium name="US DOE Joint Genome Institute"/>
            <person name="Lucas S."/>
            <person name="Copeland A."/>
            <person name="Lapidus A."/>
            <person name="Glavina del Rio T."/>
            <person name="Dalin E."/>
            <person name="Tice H."/>
            <person name="Bruce D."/>
            <person name="Goodwin L."/>
            <person name="Pitluck S."/>
            <person name="Saunders E."/>
            <person name="Brettin T."/>
            <person name="Detter J.C."/>
            <person name="Han C."/>
            <person name="Larimer F."/>
            <person name="Land M."/>
            <person name="Hauser L."/>
            <person name="Kyrpides N."/>
            <person name="Ovchinnikova G."/>
            <person name="Lovley D."/>
        </authorList>
    </citation>
    <scope>NUCLEOTIDE SEQUENCE [LARGE SCALE GENOMIC DNA]</scope>
    <source>
        <strain>M21</strain>
    </source>
</reference>
<organism>
    <name type="scientific">Geobacter sp. (strain M21)</name>
    <dbReference type="NCBI Taxonomy" id="443144"/>
    <lineage>
        <taxon>Bacteria</taxon>
        <taxon>Pseudomonadati</taxon>
        <taxon>Thermodesulfobacteriota</taxon>
        <taxon>Desulfuromonadia</taxon>
        <taxon>Geobacterales</taxon>
        <taxon>Geobacteraceae</taxon>
        <taxon>Geobacter</taxon>
    </lineage>
</organism>
<feature type="chain" id="PRO_1000213301" description="Phosphoribosyl-AMP cyclohydrolase">
    <location>
        <begin position="1"/>
        <end position="125"/>
    </location>
</feature>
<feature type="binding site" evidence="1">
    <location>
        <position position="74"/>
    </location>
    <ligand>
        <name>Mg(2+)</name>
        <dbReference type="ChEBI" id="CHEBI:18420"/>
    </ligand>
</feature>
<feature type="binding site" evidence="1">
    <location>
        <position position="75"/>
    </location>
    <ligand>
        <name>Zn(2+)</name>
        <dbReference type="ChEBI" id="CHEBI:29105"/>
        <note>ligand shared between dimeric partners</note>
    </ligand>
</feature>
<feature type="binding site" evidence="1">
    <location>
        <position position="76"/>
    </location>
    <ligand>
        <name>Mg(2+)</name>
        <dbReference type="ChEBI" id="CHEBI:18420"/>
    </ligand>
</feature>
<feature type="binding site" evidence="1">
    <location>
        <position position="78"/>
    </location>
    <ligand>
        <name>Mg(2+)</name>
        <dbReference type="ChEBI" id="CHEBI:18420"/>
    </ligand>
</feature>
<feature type="binding site" evidence="1">
    <location>
        <position position="92"/>
    </location>
    <ligand>
        <name>Zn(2+)</name>
        <dbReference type="ChEBI" id="CHEBI:29105"/>
        <note>ligand shared between dimeric partners</note>
    </ligand>
</feature>
<feature type="binding site" evidence="1">
    <location>
        <position position="99"/>
    </location>
    <ligand>
        <name>Zn(2+)</name>
        <dbReference type="ChEBI" id="CHEBI:29105"/>
        <note>ligand shared between dimeric partners</note>
    </ligand>
</feature>
<sequence length="125" mass="14178">MIKIDFEKMGGLIPAVIQDNESGEVLMVAFMDEKTLNLTLESGKTWFFSRTRNKYWMKGEESGNTQDVVEVLTDCDADTVVIKVKQNGPAACHTGNRSCFYVKYENGSWVEHSNPLFDPNTVYKK</sequence>
<gene>
    <name evidence="1" type="primary">hisI</name>
    <name type="ordered locus">GM21_0739</name>
</gene>
<evidence type="ECO:0000255" key="1">
    <source>
        <dbReference type="HAMAP-Rule" id="MF_01021"/>
    </source>
</evidence>
<name>HIS3_GEOSM</name>
<keyword id="KW-0028">Amino-acid biosynthesis</keyword>
<keyword id="KW-0963">Cytoplasm</keyword>
<keyword id="KW-0368">Histidine biosynthesis</keyword>
<keyword id="KW-0378">Hydrolase</keyword>
<keyword id="KW-0460">Magnesium</keyword>
<keyword id="KW-0479">Metal-binding</keyword>
<keyword id="KW-0862">Zinc</keyword>
<comment type="function">
    <text evidence="1">Catalyzes the hydrolysis of the adenine ring of phosphoribosyl-AMP.</text>
</comment>
<comment type="catalytic activity">
    <reaction evidence="1">
        <text>1-(5-phospho-beta-D-ribosyl)-5'-AMP + H2O = 1-(5-phospho-beta-D-ribosyl)-5-[(5-phospho-beta-D-ribosylamino)methylideneamino]imidazole-4-carboxamide</text>
        <dbReference type="Rhea" id="RHEA:20049"/>
        <dbReference type="ChEBI" id="CHEBI:15377"/>
        <dbReference type="ChEBI" id="CHEBI:58435"/>
        <dbReference type="ChEBI" id="CHEBI:59457"/>
        <dbReference type="EC" id="3.5.4.19"/>
    </reaction>
</comment>
<comment type="cofactor">
    <cofactor evidence="1">
        <name>Mg(2+)</name>
        <dbReference type="ChEBI" id="CHEBI:18420"/>
    </cofactor>
    <text evidence="1">Binds 1 Mg(2+) ion per subunit.</text>
</comment>
<comment type="cofactor">
    <cofactor evidence="1">
        <name>Zn(2+)</name>
        <dbReference type="ChEBI" id="CHEBI:29105"/>
    </cofactor>
    <text evidence="1">Binds 1 zinc ion per subunit.</text>
</comment>
<comment type="pathway">
    <text evidence="1">Amino-acid biosynthesis; L-histidine biosynthesis; L-histidine from 5-phospho-alpha-D-ribose 1-diphosphate: step 3/9.</text>
</comment>
<comment type="subunit">
    <text evidence="1">Homodimer.</text>
</comment>
<comment type="subcellular location">
    <subcellularLocation>
        <location evidence="1">Cytoplasm</location>
    </subcellularLocation>
</comment>
<comment type="similarity">
    <text evidence="1">Belongs to the PRA-CH family.</text>
</comment>
<protein>
    <recommendedName>
        <fullName evidence="1">Phosphoribosyl-AMP cyclohydrolase</fullName>
        <shortName evidence="1">PRA-CH</shortName>
        <ecNumber evidence="1">3.5.4.19</ecNumber>
    </recommendedName>
</protein>